<proteinExistence type="inferred from homology"/>
<gene>
    <name evidence="2" type="primary">vif</name>
</gene>
<protein>
    <recommendedName>
        <fullName evidence="2">Virion infectivity factor</fullName>
        <shortName evidence="2">Vif</shortName>
    </recommendedName>
    <alternativeName>
        <fullName evidence="2">SOR protein</fullName>
    </alternativeName>
    <component>
        <recommendedName>
            <fullName evidence="2">p17</fullName>
        </recommendedName>
    </component>
    <component>
        <recommendedName>
            <fullName evidence="2">p7</fullName>
        </recommendedName>
    </component>
</protein>
<accession>Q75003</accession>
<feature type="chain" id="PRO_0000245123" description="Virion infectivity factor" evidence="2">
    <location>
        <begin position="1"/>
        <end position="192"/>
    </location>
</feature>
<feature type="chain" id="PRO_0000245124" description="p17" evidence="2">
    <location>
        <begin position="1"/>
        <end position="150"/>
    </location>
</feature>
<feature type="chain" id="PRO_0000245125" description="p7" evidence="2">
    <location>
        <begin position="151"/>
        <end position="192"/>
    </location>
</feature>
<feature type="region of interest" description="Interaction with host APOBEC3F; F1-box" evidence="2">
    <location>
        <begin position="14"/>
        <end position="17"/>
    </location>
</feature>
<feature type="region of interest" description="Interaction with host APOBEC3G; G-box" evidence="2">
    <location>
        <begin position="40"/>
        <end position="44"/>
    </location>
</feature>
<feature type="region of interest" description="Interaction with host APOBEC3F and APOBEC3G; FG-box" evidence="2">
    <location>
        <begin position="54"/>
        <end position="72"/>
    </location>
</feature>
<feature type="region of interest" description="Interaction with host APOBEC3F; F2-box" evidence="2">
    <location>
        <begin position="74"/>
        <end position="79"/>
    </location>
</feature>
<feature type="region of interest" description="RNA-binding" evidence="2">
    <location>
        <begin position="75"/>
        <end position="114"/>
    </location>
</feature>
<feature type="region of interest" description="SOCS box-like" evidence="2">
    <location>
        <begin position="151"/>
        <end position="180"/>
    </location>
</feature>
<feature type="region of interest" description="Multimerization" evidence="2">
    <location>
        <begin position="151"/>
        <end position="164"/>
    </location>
</feature>
<feature type="region of interest" description="Disordered" evidence="3">
    <location>
        <begin position="159"/>
        <end position="192"/>
    </location>
</feature>
<feature type="region of interest" description="Membrane association" evidence="2">
    <location>
        <begin position="171"/>
        <end position="172"/>
    </location>
</feature>
<feature type="short sequence motif" description="HCCH motif" evidence="2">
    <location>
        <begin position="108"/>
        <end position="139"/>
    </location>
</feature>
<feature type="short sequence motif" description="BC-box-like motif" evidence="2">
    <location>
        <begin position="144"/>
        <end position="153"/>
    </location>
</feature>
<feature type="compositionally biased region" description="Basic residues" evidence="3">
    <location>
        <begin position="176"/>
        <end position="186"/>
    </location>
</feature>
<feature type="binding site" evidence="2">
    <location>
        <position position="108"/>
    </location>
    <ligand>
        <name>Zn(2+)</name>
        <dbReference type="ChEBI" id="CHEBI:29105"/>
    </ligand>
</feature>
<feature type="binding site" evidence="2">
    <location>
        <position position="114"/>
    </location>
    <ligand>
        <name>Zn(2+)</name>
        <dbReference type="ChEBI" id="CHEBI:29105"/>
    </ligand>
</feature>
<feature type="binding site" evidence="2">
    <location>
        <position position="133"/>
    </location>
    <ligand>
        <name>Zn(2+)</name>
        <dbReference type="ChEBI" id="CHEBI:29105"/>
    </ligand>
</feature>
<feature type="binding site" evidence="2">
    <location>
        <position position="139"/>
    </location>
    <ligand>
        <name>Zn(2+)</name>
        <dbReference type="ChEBI" id="CHEBI:29105"/>
    </ligand>
</feature>
<feature type="site" description="Cleavage in virion (by viral protease)" evidence="2">
    <location>
        <begin position="150"/>
        <end position="151"/>
    </location>
</feature>
<feature type="modified residue" description="Phosphothreonine; by host MAP4K1" evidence="2">
    <location>
        <position position="96"/>
    </location>
</feature>
<feature type="modified residue" description="Phosphoserine; by host" evidence="2">
    <location>
        <position position="144"/>
    </location>
</feature>
<feature type="modified residue" description="Phosphoserine; by host MAP4K1" evidence="2">
    <location>
        <position position="165"/>
    </location>
</feature>
<feature type="modified residue" description="Phosphothreonine; by host" evidence="2">
    <location>
        <position position="188"/>
    </location>
</feature>
<organismHost>
    <name type="scientific">Homo sapiens</name>
    <name type="common">Human</name>
    <dbReference type="NCBI Taxonomy" id="9606"/>
</organismHost>
<name>VIF_HV1ET</name>
<reference key="1">
    <citation type="journal article" date="1996" name="AIDS Res. Hum. Retroviruses">
        <title>Full-length sequence of an ethiopian human immunodeficiency virus type 1 (HIV-1) isolate of genetic subtype C.</title>
        <authorList>
            <person name="Salminen M.O."/>
            <person name="Johansson B."/>
            <person name="Sonnerborg A."/>
            <person name="Ayehunie S."/>
            <person name="Gotte D."/>
            <person name="Leinikki P."/>
            <person name="Burke D.S."/>
            <person name="McCutchan F.E."/>
        </authorList>
    </citation>
    <scope>NUCLEOTIDE SEQUENCE [GENOMIC DNA]</scope>
</reference>
<dbReference type="EMBL" id="U46016">
    <property type="protein sequence ID" value="AAB36502.1"/>
    <property type="molecule type" value="Genomic_DNA"/>
</dbReference>
<dbReference type="SMR" id="Q75003"/>
<dbReference type="Proteomes" id="UP000007694">
    <property type="component" value="Segment"/>
</dbReference>
<dbReference type="GO" id="GO:0030430">
    <property type="term" value="C:host cell cytoplasm"/>
    <property type="evidence" value="ECO:0007669"/>
    <property type="project" value="UniProtKB-SubCell"/>
</dbReference>
<dbReference type="GO" id="GO:0020002">
    <property type="term" value="C:host cell plasma membrane"/>
    <property type="evidence" value="ECO:0007669"/>
    <property type="project" value="UniProtKB-SubCell"/>
</dbReference>
<dbReference type="GO" id="GO:0016020">
    <property type="term" value="C:membrane"/>
    <property type="evidence" value="ECO:0007669"/>
    <property type="project" value="UniProtKB-UniRule"/>
</dbReference>
<dbReference type="GO" id="GO:0044423">
    <property type="term" value="C:virion component"/>
    <property type="evidence" value="ECO:0007669"/>
    <property type="project" value="UniProtKB-UniRule"/>
</dbReference>
<dbReference type="GO" id="GO:0046872">
    <property type="term" value="F:metal ion binding"/>
    <property type="evidence" value="ECO:0007669"/>
    <property type="project" value="UniProtKB-KW"/>
</dbReference>
<dbReference type="GO" id="GO:0003723">
    <property type="term" value="F:RNA binding"/>
    <property type="evidence" value="ECO:0007669"/>
    <property type="project" value="UniProtKB-UniRule"/>
</dbReference>
<dbReference type="GO" id="GO:0019058">
    <property type="term" value="P:viral life cycle"/>
    <property type="evidence" value="ECO:0007669"/>
    <property type="project" value="InterPro"/>
</dbReference>
<dbReference type="HAMAP" id="MF_04081">
    <property type="entry name" value="HIV_VIF"/>
    <property type="match status" value="1"/>
</dbReference>
<dbReference type="InterPro" id="IPR000475">
    <property type="entry name" value="Vif"/>
</dbReference>
<dbReference type="Pfam" id="PF00559">
    <property type="entry name" value="Vif"/>
    <property type="match status" value="1"/>
</dbReference>
<dbReference type="PRINTS" id="PR00349">
    <property type="entry name" value="VIRIONINFFCT"/>
</dbReference>
<sequence>MENRWQVLIVWQVDRMKIRTWNSLVKHHMHISRRANGWVYRHHYDSRHPKVSSEVHIPLGEARLIIKTYWGLQTGERDWHLGHGVSIEWRLRSYNTQVDPGLADHLIHMHYFDCFAESAIRKAILGYRVSPRCDYQAGHNKVGSLQYLALTALIKPKKAKPPLPSVSKLVEDKWNKPQKTRGRRGNHTMNGH</sequence>
<keyword id="KW-0014">AIDS</keyword>
<keyword id="KW-1032">Host cell membrane</keyword>
<keyword id="KW-1035">Host cytoplasm</keyword>
<keyword id="KW-1043">Host membrane</keyword>
<keyword id="KW-0945">Host-virus interaction</keyword>
<keyword id="KW-0472">Membrane</keyword>
<keyword id="KW-0479">Metal-binding</keyword>
<keyword id="KW-0597">Phosphoprotein</keyword>
<keyword id="KW-1185">Reference proteome</keyword>
<keyword id="KW-0694">RNA-binding</keyword>
<keyword id="KW-0832">Ubl conjugation</keyword>
<keyword id="KW-0833">Ubl conjugation pathway</keyword>
<keyword id="KW-0946">Virion</keyword>
<keyword id="KW-0862">Zinc</keyword>
<comment type="function">
    <text evidence="2">Counteracts the innate antiviral activity of host APOBEC3F and APOBEC3G by promoting their ubiquitination and degradation. Acts as a substrate recognition component of an E3 ubiquitin-protein ligase complex: mechanistically, Vif hijacks a host cullin-5-RING E3 ubiquitin-protein ligase complex (ECS complex) and the transcription coactivator CBFB/CBF-beta to form an active E3 ubiquitin-protein ligase complex that targets APOBEC3G and APOBEC3F for polyubiquitination, leading to their degradation by the proteasome. Vif interaction with APOBEC3G also blocks its cytidine deaminase activity in a proteasome-independent manner, suggesting a dual inhibitory mechanism. May interact directly with APOBEC3G mRNA in order to inhibit its translation. Association with CBFB/CBF-beta also inhibits the transcription coactivator activity of CBFB/CBF-beta. Seems to play a role in viral morphology by affecting the stability of the viral nucleoprotein core. Finally, Vif also contributes to the G2 cell cycle arrest observed in HIV infected cells.</text>
</comment>
<comment type="subunit">
    <text evidence="1">Homomultimer; in vitro and presumably in vivo. Interacts with viral RNA and Pr55Gag precursor; these interactions mediate Vif incorporation into the virion. Interacts with the viral reverse transcriptase. Forms cullin-5-RING E3 ubiquitin-protein ligase complex (ECS complex) by interacting with host CUL5, RBX2, elongin BC complex (ELOB and ELOC) and CBFB/CBF-beta. Within the ECS complex, Vif interacts directly with host CUL5, ELOC and APOBEC (APOBEC3F and APOBEC3G) substrates. The ECS complex also contains some single-stranded RNA (ssRNA) that acts as a glue that bridges Vif with APOBEC (APOBEC3F and APOBEC3G) substrates. Interacts with host UBCE7IP1 isoform 3/ZIN and possibly with SAT. Interacts with host tyrosine kinases HCK and FYN; these interactions may decrease level of phosphorylated APOBEC3G incorporation into virions. Interacts with host ABCE1; this interaction may play a role in protecting viral RNA from damage during viral assembly. Interacts with host MDM2; this interaction targets Vif for degradation by the proteasome.</text>
</comment>
<comment type="subcellular location">
    <subcellularLocation>
        <location evidence="2">Host cytoplasm</location>
    </subcellularLocation>
    <subcellularLocation>
        <location evidence="2">Host cell membrane</location>
        <topology evidence="2">Peripheral membrane protein</topology>
        <orientation evidence="2">Cytoplasmic side</orientation>
    </subcellularLocation>
    <subcellularLocation>
        <location evidence="2">Virion</location>
    </subcellularLocation>
    <text evidence="2">In the cytoplasm, seems to colocalize with intermediate filament vimentin. A fraction is associated with the cytoplasmic side of cellular membranes, presumably via the interaction with Pr55Gag precursor. Incorporated in virions at a ratio of approximately 7 to 20 molecules per virion.</text>
</comment>
<comment type="induction">
    <text evidence="2">Expressed late during infection in a Rev-dependent manner.</text>
</comment>
<comment type="domain">
    <text evidence="2">The BC-like-box motif mediates the interaction with elongin BC complex.</text>
</comment>
<comment type="domain">
    <text evidence="2">The HCCH motif (H-x(5)-C-x(18)-C-x(5)-H) mediates the interaction with CUL5.</text>
</comment>
<comment type="PTM">
    <text evidence="2">Processed in virion by the viral protease.</text>
</comment>
<comment type="PTM">
    <text evidence="2">Highly phosphorylated on serine and threonine residues.</text>
</comment>
<comment type="PTM">
    <text evidence="2">Polyubiquitinated and degraded by the proteasome in the presence of APOBEC3G.</text>
</comment>
<comment type="miscellaneous">
    <text evidence="2">Vif-defective viruses show catastrophic failure in reverse transcription due to APOBEC-induced mutations that initiate a DNA base repair pathway and compromise the structural integrity of the ssDNA. In the absence of Vif, the virion is morphologically abnormal.</text>
</comment>
<comment type="miscellaneous">
    <text evidence="2">HIV-1 lineages are divided in three main groups, M (for Major), O (for Outlier), and N (for New, or Non-M, Non-O). The vast majority of strains found worldwide belong to the group M. Group O seems to be endemic to and largely confined to Cameroon and neighboring countries in West Central Africa, where these viruses represent a small minority of HIV-1 strains. The group N is represented by a limited number of isolates from Cameroonian persons. The group M is further subdivided in 9 clades or subtypes (A to D, F to H, J and K).</text>
</comment>
<comment type="miscellaneous">
    <text evidence="2">Required for replication in 'nonpermissive' cells, including primary T-cells, macrophages and certain T-cell lines, but is dispensable for replication in 'permissive' cell lines, such as 293T cells. In nonpermissive cells, Vif-defective viruses can produce virions, but they fail to complete reverse transcription and cannot successfully infect new cells.</text>
</comment>
<comment type="similarity">
    <text evidence="2">Belongs to the primate lentivirus group Vif protein family.</text>
</comment>
<organism>
    <name type="scientific">Human immunodeficiency virus type 1 group M subtype C (isolate ETH2220)</name>
    <name type="common">HIV-1</name>
    <dbReference type="NCBI Taxonomy" id="388796"/>
    <lineage>
        <taxon>Viruses</taxon>
        <taxon>Riboviria</taxon>
        <taxon>Pararnavirae</taxon>
        <taxon>Artverviricota</taxon>
        <taxon>Revtraviricetes</taxon>
        <taxon>Ortervirales</taxon>
        <taxon>Retroviridae</taxon>
        <taxon>Orthoretrovirinae</taxon>
        <taxon>Lentivirus</taxon>
        <taxon>Human immunodeficiency virus type 1</taxon>
    </lineage>
</organism>
<evidence type="ECO:0000250" key="1">
    <source>
        <dbReference type="UniProtKB" id="O70897"/>
    </source>
</evidence>
<evidence type="ECO:0000255" key="2">
    <source>
        <dbReference type="HAMAP-Rule" id="MF_04081"/>
    </source>
</evidence>
<evidence type="ECO:0000256" key="3">
    <source>
        <dbReference type="SAM" id="MobiDB-lite"/>
    </source>
</evidence>